<protein>
    <recommendedName>
        <fullName evidence="1">Deoxyuridine 5'-triphosphate nucleotidohydrolase</fullName>
        <shortName evidence="1">dUTPase</shortName>
        <ecNumber evidence="1">3.6.1.23</ecNumber>
    </recommendedName>
    <alternativeName>
        <fullName evidence="1">dUTP pyrophosphatase</fullName>
    </alternativeName>
</protein>
<comment type="function">
    <text evidence="1">This enzyme is involved in nucleotide metabolism: it produces dUMP, the immediate precursor of thymidine nucleotides and it decreases the intracellular concentration of dUTP so that uracil cannot be incorporated into DNA.</text>
</comment>
<comment type="catalytic activity">
    <reaction evidence="1">
        <text>dUTP + H2O = dUMP + diphosphate + H(+)</text>
        <dbReference type="Rhea" id="RHEA:10248"/>
        <dbReference type="ChEBI" id="CHEBI:15377"/>
        <dbReference type="ChEBI" id="CHEBI:15378"/>
        <dbReference type="ChEBI" id="CHEBI:33019"/>
        <dbReference type="ChEBI" id="CHEBI:61555"/>
        <dbReference type="ChEBI" id="CHEBI:246422"/>
        <dbReference type="EC" id="3.6.1.23"/>
    </reaction>
</comment>
<comment type="cofactor">
    <cofactor evidence="1">
        <name>Mg(2+)</name>
        <dbReference type="ChEBI" id="CHEBI:18420"/>
    </cofactor>
</comment>
<comment type="pathway">
    <text evidence="1">Pyrimidine metabolism; dUMP biosynthesis; dUMP from dCTP (dUTP route): step 2/2.</text>
</comment>
<comment type="similarity">
    <text evidence="1">Belongs to the dUTPase family.</text>
</comment>
<accession>Q2A5H6</accession>
<reference key="1">
    <citation type="submission" date="2006-03" db="EMBL/GenBank/DDBJ databases">
        <title>Complete genome sequence of Francisella tularensis LVS (Live Vaccine Strain).</title>
        <authorList>
            <person name="Chain P."/>
            <person name="Larimer F."/>
            <person name="Land M."/>
            <person name="Stilwagen S."/>
            <person name="Larsson P."/>
            <person name="Bearden S."/>
            <person name="Chu M."/>
            <person name="Oyston P."/>
            <person name="Forsman M."/>
            <person name="Andersson S."/>
            <person name="Lindler L."/>
            <person name="Titball R."/>
            <person name="Garcia E."/>
        </authorList>
    </citation>
    <scope>NUCLEOTIDE SEQUENCE [LARGE SCALE GENOMIC DNA]</scope>
    <source>
        <strain>LVS</strain>
    </source>
</reference>
<feature type="chain" id="PRO_1000015469" description="Deoxyuridine 5'-triphosphate nucleotidohydrolase">
    <location>
        <begin position="1"/>
        <end position="148"/>
    </location>
</feature>
<feature type="binding site" evidence="1">
    <location>
        <begin position="67"/>
        <end position="69"/>
    </location>
    <ligand>
        <name>substrate</name>
    </ligand>
</feature>
<feature type="binding site" evidence="1">
    <location>
        <position position="80"/>
    </location>
    <ligand>
        <name>substrate</name>
    </ligand>
</feature>
<feature type="binding site" evidence="1">
    <location>
        <begin position="84"/>
        <end position="86"/>
    </location>
    <ligand>
        <name>substrate</name>
    </ligand>
</feature>
<feature type="binding site" evidence="1">
    <location>
        <position position="94"/>
    </location>
    <ligand>
        <name>substrate</name>
    </ligand>
</feature>
<proteinExistence type="inferred from homology"/>
<dbReference type="EC" id="3.6.1.23" evidence="1"/>
<dbReference type="EMBL" id="AM233362">
    <property type="protein sequence ID" value="CAJ78671.1"/>
    <property type="molecule type" value="Genomic_DNA"/>
</dbReference>
<dbReference type="RefSeq" id="WP_003014311.1">
    <property type="nucleotide sequence ID" value="NZ_CP009694.1"/>
</dbReference>
<dbReference type="SMR" id="Q2A5H6"/>
<dbReference type="KEGG" id="ftl:FTL_0230"/>
<dbReference type="UniPathway" id="UPA00610">
    <property type="reaction ID" value="UER00666"/>
</dbReference>
<dbReference type="Proteomes" id="UP000001944">
    <property type="component" value="Chromosome"/>
</dbReference>
<dbReference type="GO" id="GO:0004170">
    <property type="term" value="F:dUTP diphosphatase activity"/>
    <property type="evidence" value="ECO:0007669"/>
    <property type="project" value="UniProtKB-UniRule"/>
</dbReference>
<dbReference type="GO" id="GO:0000287">
    <property type="term" value="F:magnesium ion binding"/>
    <property type="evidence" value="ECO:0007669"/>
    <property type="project" value="UniProtKB-UniRule"/>
</dbReference>
<dbReference type="GO" id="GO:0006226">
    <property type="term" value="P:dUMP biosynthetic process"/>
    <property type="evidence" value="ECO:0007669"/>
    <property type="project" value="UniProtKB-UniRule"/>
</dbReference>
<dbReference type="GO" id="GO:0046081">
    <property type="term" value="P:dUTP catabolic process"/>
    <property type="evidence" value="ECO:0007669"/>
    <property type="project" value="InterPro"/>
</dbReference>
<dbReference type="CDD" id="cd07557">
    <property type="entry name" value="trimeric_dUTPase"/>
    <property type="match status" value="1"/>
</dbReference>
<dbReference type="FunFam" id="2.70.40.10:FF:000002">
    <property type="entry name" value="dUTP diphosphatase"/>
    <property type="match status" value="1"/>
</dbReference>
<dbReference type="Gene3D" id="2.70.40.10">
    <property type="match status" value="1"/>
</dbReference>
<dbReference type="HAMAP" id="MF_00116">
    <property type="entry name" value="dUTPase_bact"/>
    <property type="match status" value="1"/>
</dbReference>
<dbReference type="InterPro" id="IPR008181">
    <property type="entry name" value="dUTPase"/>
</dbReference>
<dbReference type="InterPro" id="IPR029054">
    <property type="entry name" value="dUTPase-like"/>
</dbReference>
<dbReference type="InterPro" id="IPR036157">
    <property type="entry name" value="dUTPase-like_sf"/>
</dbReference>
<dbReference type="InterPro" id="IPR033704">
    <property type="entry name" value="dUTPase_trimeric"/>
</dbReference>
<dbReference type="NCBIfam" id="TIGR00576">
    <property type="entry name" value="dut"/>
    <property type="match status" value="1"/>
</dbReference>
<dbReference type="NCBIfam" id="NF001862">
    <property type="entry name" value="PRK00601.1"/>
    <property type="match status" value="1"/>
</dbReference>
<dbReference type="PANTHER" id="PTHR11241">
    <property type="entry name" value="DEOXYURIDINE 5'-TRIPHOSPHATE NUCLEOTIDOHYDROLASE"/>
    <property type="match status" value="1"/>
</dbReference>
<dbReference type="PANTHER" id="PTHR11241:SF0">
    <property type="entry name" value="DEOXYURIDINE 5'-TRIPHOSPHATE NUCLEOTIDOHYDROLASE"/>
    <property type="match status" value="1"/>
</dbReference>
<dbReference type="Pfam" id="PF00692">
    <property type="entry name" value="dUTPase"/>
    <property type="match status" value="1"/>
</dbReference>
<dbReference type="SUPFAM" id="SSF51283">
    <property type="entry name" value="dUTPase-like"/>
    <property type="match status" value="1"/>
</dbReference>
<evidence type="ECO:0000255" key="1">
    <source>
        <dbReference type="HAMAP-Rule" id="MF_00116"/>
    </source>
</evidence>
<organism>
    <name type="scientific">Francisella tularensis subsp. holarctica (strain LVS)</name>
    <dbReference type="NCBI Taxonomy" id="376619"/>
    <lineage>
        <taxon>Bacteria</taxon>
        <taxon>Pseudomonadati</taxon>
        <taxon>Pseudomonadota</taxon>
        <taxon>Gammaproteobacteria</taxon>
        <taxon>Thiotrichales</taxon>
        <taxon>Francisellaceae</taxon>
        <taxon>Francisella</taxon>
    </lineage>
</organism>
<gene>
    <name evidence="1" type="primary">dut</name>
    <name type="ordered locus">FTL_0230</name>
</gene>
<keyword id="KW-0378">Hydrolase</keyword>
<keyword id="KW-0460">Magnesium</keyword>
<keyword id="KW-0479">Metal-binding</keyword>
<keyword id="KW-0546">Nucleotide metabolism</keyword>
<keyword id="KW-1185">Reference proteome</keyword>
<name>DUT_FRATH</name>
<sequence length="148" mass="15956">MKVELKILNKELIKELPGYATEGSAAIDLRACISESIYLKSGECKLIATGIAINIANPNYAAMILPRSGLGHKKGLVLGNGTGLIDSDYQGELMVSCFNRSQETIEIEPLMRFAQLVIVPVVQANFEIVEDFSQQSVRATGGFGHTGV</sequence>